<dbReference type="EC" id="3.5.1.41" evidence="2"/>
<dbReference type="EMBL" id="AAEY01000020">
    <property type="protein sequence ID" value="EAL21220.1"/>
    <property type="molecule type" value="Genomic_DNA"/>
</dbReference>
<dbReference type="RefSeq" id="XP_775867.1">
    <property type="nucleotide sequence ID" value="XM_770774.1"/>
</dbReference>
<dbReference type="SMR" id="P0CP77"/>
<dbReference type="GlyCosmos" id="P0CP77">
    <property type="glycosylation" value="5 sites, No reported glycans"/>
</dbReference>
<dbReference type="GeneID" id="4935664"/>
<dbReference type="KEGG" id="cnb:CNBD2750"/>
<dbReference type="VEuPathDB" id="FungiDB:CNBD2750"/>
<dbReference type="HOGENOM" id="CLU_042090_2_0_1"/>
<dbReference type="OrthoDB" id="5692at5206"/>
<dbReference type="GO" id="GO:0005886">
    <property type="term" value="C:plasma membrane"/>
    <property type="evidence" value="ECO:0007669"/>
    <property type="project" value="UniProtKB-SubCell"/>
</dbReference>
<dbReference type="GO" id="GO:0098552">
    <property type="term" value="C:side of membrane"/>
    <property type="evidence" value="ECO:0007669"/>
    <property type="project" value="UniProtKB-KW"/>
</dbReference>
<dbReference type="GO" id="GO:0008061">
    <property type="term" value="F:chitin binding"/>
    <property type="evidence" value="ECO:0007669"/>
    <property type="project" value="UniProtKB-KW"/>
</dbReference>
<dbReference type="GO" id="GO:0004099">
    <property type="term" value="F:chitin deacetylase activity"/>
    <property type="evidence" value="ECO:0007669"/>
    <property type="project" value="UniProtKB-EC"/>
</dbReference>
<dbReference type="GO" id="GO:0046872">
    <property type="term" value="F:metal ion binding"/>
    <property type="evidence" value="ECO:0007669"/>
    <property type="project" value="UniProtKB-KW"/>
</dbReference>
<dbReference type="GO" id="GO:0071555">
    <property type="term" value="P:cell wall organization"/>
    <property type="evidence" value="ECO:0007669"/>
    <property type="project" value="UniProtKB-KW"/>
</dbReference>
<dbReference type="GO" id="GO:0006032">
    <property type="term" value="P:chitin catabolic process"/>
    <property type="evidence" value="ECO:0007669"/>
    <property type="project" value="UniProtKB-KW"/>
</dbReference>
<dbReference type="GO" id="GO:0009272">
    <property type="term" value="P:fungal-type cell wall biogenesis"/>
    <property type="evidence" value="ECO:0007669"/>
    <property type="project" value="UniProtKB-ARBA"/>
</dbReference>
<dbReference type="GO" id="GO:0000272">
    <property type="term" value="P:polysaccharide catabolic process"/>
    <property type="evidence" value="ECO:0007669"/>
    <property type="project" value="UniProtKB-KW"/>
</dbReference>
<dbReference type="CDD" id="cd10952">
    <property type="entry name" value="CE4_MrCDA_like"/>
    <property type="match status" value="1"/>
</dbReference>
<dbReference type="FunFam" id="3.20.20.370:FF:000009">
    <property type="entry name" value="Chitin deacetylase"/>
    <property type="match status" value="1"/>
</dbReference>
<dbReference type="Gene3D" id="3.20.20.370">
    <property type="entry name" value="Glycoside hydrolase/deacetylase"/>
    <property type="match status" value="1"/>
</dbReference>
<dbReference type="InterPro" id="IPR011330">
    <property type="entry name" value="Glyco_hydro/deAcase_b/a-brl"/>
</dbReference>
<dbReference type="InterPro" id="IPR002509">
    <property type="entry name" value="NODB_dom"/>
</dbReference>
<dbReference type="InterPro" id="IPR050248">
    <property type="entry name" value="Polysacc_deacetylase_ArnD"/>
</dbReference>
<dbReference type="PANTHER" id="PTHR10587:SF135">
    <property type="entry name" value="CHITIN DEACETYLASE 3"/>
    <property type="match status" value="1"/>
</dbReference>
<dbReference type="PANTHER" id="PTHR10587">
    <property type="entry name" value="GLYCOSYL TRANSFERASE-RELATED"/>
    <property type="match status" value="1"/>
</dbReference>
<dbReference type="Pfam" id="PF01522">
    <property type="entry name" value="Polysacc_deac_1"/>
    <property type="match status" value="1"/>
</dbReference>
<dbReference type="SUPFAM" id="SSF88713">
    <property type="entry name" value="Glycoside hydrolase/deacetylase"/>
    <property type="match status" value="1"/>
</dbReference>
<dbReference type="PROSITE" id="PS51677">
    <property type="entry name" value="NODB"/>
    <property type="match status" value="1"/>
</dbReference>
<organism>
    <name type="scientific">Cryptococcus neoformans var. neoformans serotype D (strain B-3501A)</name>
    <name type="common">Filobasidiella neoformans</name>
    <dbReference type="NCBI Taxonomy" id="283643"/>
    <lineage>
        <taxon>Eukaryota</taxon>
        <taxon>Fungi</taxon>
        <taxon>Dikarya</taxon>
        <taxon>Basidiomycota</taxon>
        <taxon>Agaricomycotina</taxon>
        <taxon>Tremellomycetes</taxon>
        <taxon>Tremellales</taxon>
        <taxon>Cryptococcaceae</taxon>
        <taxon>Cryptococcus</taxon>
        <taxon>Cryptococcus neoformans species complex</taxon>
    </lineage>
</organism>
<name>CDA3_CRYNB</name>
<protein>
    <recommendedName>
        <fullName evidence="6">Chitin deacetylase 3</fullName>
        <ecNumber evidence="2">3.5.1.41</ecNumber>
    </recommendedName>
</protein>
<comment type="function">
    <text evidence="2">Hydrolyzes the N-acetamido groups of N-acetyl-D-glucosamine residues in chitin to form chitosan and acetate (By similarity). Chitosan is required to anchor melanin to the cell wall, for maintenance of cell wall integrity, and for proper cytokinesis (By similarity). Chitosan offers an advantage during infection as it is less readily detected than chitin by host immunosurveillance mechanisms (By similarity).</text>
</comment>
<comment type="catalytic activity">
    <reaction evidence="2">
        <text>[(1-&gt;4)-N-acetyl-beta-D-glucosaminyl](n) + n H2O = chitosan + n acetate</text>
        <dbReference type="Rhea" id="RHEA:10464"/>
        <dbReference type="Rhea" id="RHEA-COMP:9593"/>
        <dbReference type="Rhea" id="RHEA-COMP:9597"/>
        <dbReference type="ChEBI" id="CHEBI:15377"/>
        <dbReference type="ChEBI" id="CHEBI:17029"/>
        <dbReference type="ChEBI" id="CHEBI:30089"/>
        <dbReference type="ChEBI" id="CHEBI:57704"/>
        <dbReference type="EC" id="3.5.1.41"/>
    </reaction>
    <physiologicalReaction direction="left-to-right" evidence="2">
        <dbReference type="Rhea" id="RHEA:10465"/>
    </physiologicalReaction>
</comment>
<comment type="cofactor">
    <cofactor evidence="3">
        <name>Co(2+)</name>
        <dbReference type="ChEBI" id="CHEBI:48828"/>
    </cofactor>
</comment>
<comment type="subcellular location">
    <subcellularLocation>
        <location evidence="4">Cell membrane</location>
        <topology evidence="4">Lipid-anchor</topology>
        <topology evidence="4">GPI-anchor</topology>
    </subcellularLocation>
</comment>
<comment type="similarity">
    <text evidence="6">Belongs to the polysaccharide deacetylase family.</text>
</comment>
<accession>P0CP77</accession>
<accession>Q53I51</accession>
<accession>Q55U29</accession>
<accession>Q5KIB3</accession>
<reference key="1">
    <citation type="journal article" date="2005" name="Science">
        <title>The genome of the basidiomycetous yeast and human pathogen Cryptococcus neoformans.</title>
        <authorList>
            <person name="Loftus B.J."/>
            <person name="Fung E."/>
            <person name="Roncaglia P."/>
            <person name="Rowley D."/>
            <person name="Amedeo P."/>
            <person name="Bruno D."/>
            <person name="Vamathevan J."/>
            <person name="Miranda M."/>
            <person name="Anderson I.J."/>
            <person name="Fraser J.A."/>
            <person name="Allen J.E."/>
            <person name="Bosdet I.E."/>
            <person name="Brent M.R."/>
            <person name="Chiu R."/>
            <person name="Doering T.L."/>
            <person name="Donlin M.J."/>
            <person name="D'Souza C.A."/>
            <person name="Fox D.S."/>
            <person name="Grinberg V."/>
            <person name="Fu J."/>
            <person name="Fukushima M."/>
            <person name="Haas B.J."/>
            <person name="Huang J.C."/>
            <person name="Janbon G."/>
            <person name="Jones S.J.M."/>
            <person name="Koo H.L."/>
            <person name="Krzywinski M.I."/>
            <person name="Kwon-Chung K.J."/>
            <person name="Lengeler K.B."/>
            <person name="Maiti R."/>
            <person name="Marra M.A."/>
            <person name="Marra R.E."/>
            <person name="Mathewson C.A."/>
            <person name="Mitchell T.G."/>
            <person name="Pertea M."/>
            <person name="Riggs F.R."/>
            <person name="Salzberg S.L."/>
            <person name="Schein J.E."/>
            <person name="Shvartsbeyn A."/>
            <person name="Shin H."/>
            <person name="Shumway M."/>
            <person name="Specht C.A."/>
            <person name="Suh B.B."/>
            <person name="Tenney A."/>
            <person name="Utterback T.R."/>
            <person name="Wickes B.L."/>
            <person name="Wortman J.R."/>
            <person name="Wye N.H."/>
            <person name="Kronstad J.W."/>
            <person name="Lodge J.K."/>
            <person name="Heitman J."/>
            <person name="Davis R.W."/>
            <person name="Fraser C.M."/>
            <person name="Hyman R.W."/>
        </authorList>
    </citation>
    <scope>NUCLEOTIDE SEQUENCE [LARGE SCALE GENOMIC DNA]</scope>
    <source>
        <strain>B-3501A</strain>
    </source>
</reference>
<sequence length="410" mass="43993">MYGHLSLSTLSLLAVVAAAPFHESWLQPRDSDVSQLFRRGAPDPKASDYLSYYPSPGSTPNVSTIPQAWLDKLATVQLPNVSVATANDGRPTYPNNENDGDSEICSFTDQCYVEDDLYSPPGEKVWALSFDDGPTDVSPALYDYLAQNNISSSATHFMIGGNIITSPQSVLIAIEAGGHLAVHTWSHPYMTTLTNEQVVAELGWTMQALSDLNGGRIPLYWRPPYGDVDNRVRAIAKGVFGLVTVLWDSDTNDWAISDQPDQYSVASVEAYFDTLVTGNRTQGLLLLEHELDNNTVEVFETEYPKAVANGWSVKNVADAFSMKWYLNSGKGNDDVVTTMSVAGTLTTAKPTHTSTSVASATATSSASVTDSAGVSIASAASSQESSSWPIANRPSLFVIACGLALAAIMV</sequence>
<gene>
    <name evidence="6" type="primary">CDA3</name>
    <name evidence="6" type="synonym">MP 84</name>
    <name type="ordered locus">CNBD2750</name>
</gene>
<feature type="signal peptide" evidence="4">
    <location>
        <begin position="1"/>
        <end position="18"/>
    </location>
</feature>
<feature type="propeptide" id="PRO_0000410197" evidence="1">
    <location>
        <begin position="19"/>
        <end position="39"/>
    </location>
</feature>
<feature type="chain" id="PRO_0000410198" description="Chitin deacetylase 3">
    <location>
        <begin position="40"/>
        <end position="385"/>
    </location>
</feature>
<feature type="propeptide" id="PRO_0000451830" description="Removed in mature form" evidence="4">
    <location>
        <begin position="386"/>
        <end position="410"/>
    </location>
</feature>
<feature type="domain" description="NodB homology" evidence="5">
    <location>
        <begin position="124"/>
        <end position="314"/>
    </location>
</feature>
<feature type="active site" description="Proton acceptor" evidence="5">
    <location>
        <position position="131"/>
    </location>
</feature>
<feature type="active site" description="Proton donor" evidence="5">
    <location>
        <position position="289"/>
    </location>
</feature>
<feature type="binding site" evidence="3">
    <location>
        <position position="131"/>
    </location>
    <ligand>
        <name>acetate</name>
        <dbReference type="ChEBI" id="CHEBI:30089"/>
    </ligand>
</feature>
<feature type="binding site" evidence="3">
    <location>
        <position position="132"/>
    </location>
    <ligand>
        <name>Co(2+)</name>
        <dbReference type="ChEBI" id="CHEBI:48828"/>
    </ligand>
</feature>
<feature type="binding site" evidence="3">
    <location>
        <position position="183"/>
    </location>
    <ligand>
        <name>Co(2+)</name>
        <dbReference type="ChEBI" id="CHEBI:48828"/>
    </ligand>
</feature>
<feature type="binding site" evidence="3">
    <location>
        <position position="187"/>
    </location>
    <ligand>
        <name>Co(2+)</name>
        <dbReference type="ChEBI" id="CHEBI:48828"/>
    </ligand>
</feature>
<feature type="binding site" evidence="3">
    <location>
        <position position="225"/>
    </location>
    <ligand>
        <name>acetate</name>
        <dbReference type="ChEBI" id="CHEBI:30089"/>
    </ligand>
</feature>
<feature type="lipid moiety-binding region" description="GPI-anchor amidated serine" evidence="4">
    <location>
        <position position="385"/>
    </location>
</feature>
<feature type="glycosylation site" description="N-linked (GlcNAc...) asparagine" evidence="4">
    <location>
        <position position="61"/>
    </location>
</feature>
<feature type="glycosylation site" description="N-linked (GlcNAc...) asparagine" evidence="4">
    <location>
        <position position="80"/>
    </location>
</feature>
<feature type="glycosylation site" description="N-linked (GlcNAc...) asparagine" evidence="4">
    <location>
        <position position="149"/>
    </location>
</feature>
<feature type="glycosylation site" description="N-linked (GlcNAc...) asparagine" evidence="4">
    <location>
        <position position="279"/>
    </location>
</feature>
<feature type="glycosylation site" description="N-linked (GlcNAc...) asparagine" evidence="4">
    <location>
        <position position="293"/>
    </location>
</feature>
<proteinExistence type="inferred from homology"/>
<evidence type="ECO:0000250" key="1"/>
<evidence type="ECO:0000250" key="2">
    <source>
        <dbReference type="UniProtKB" id="P82476"/>
    </source>
</evidence>
<evidence type="ECO:0000250" key="3">
    <source>
        <dbReference type="UniProtKB" id="Q6DWK3"/>
    </source>
</evidence>
<evidence type="ECO:0000255" key="4"/>
<evidence type="ECO:0000255" key="5">
    <source>
        <dbReference type="PROSITE-ProRule" id="PRU01014"/>
    </source>
</evidence>
<evidence type="ECO:0000305" key="6"/>
<keyword id="KW-0119">Carbohydrate metabolism</keyword>
<keyword id="KW-1003">Cell membrane</keyword>
<keyword id="KW-0961">Cell wall biogenesis/degradation</keyword>
<keyword id="KW-0146">Chitin degradation</keyword>
<keyword id="KW-0147">Chitin-binding</keyword>
<keyword id="KW-0165">Cleavage on pair of basic residues</keyword>
<keyword id="KW-0170">Cobalt</keyword>
<keyword id="KW-0325">Glycoprotein</keyword>
<keyword id="KW-0336">GPI-anchor</keyword>
<keyword id="KW-0378">Hydrolase</keyword>
<keyword id="KW-0449">Lipoprotein</keyword>
<keyword id="KW-0472">Membrane</keyword>
<keyword id="KW-0479">Metal-binding</keyword>
<keyword id="KW-0624">Polysaccharide degradation</keyword>
<keyword id="KW-0732">Signal</keyword>